<organism>
    <name type="scientific">Trypanosoma congolense</name>
    <dbReference type="NCBI Taxonomy" id="5692"/>
    <lineage>
        <taxon>Eukaryota</taxon>
        <taxon>Discoba</taxon>
        <taxon>Euglenozoa</taxon>
        <taxon>Kinetoplastea</taxon>
        <taxon>Metakinetoplastina</taxon>
        <taxon>Trypanosomatida</taxon>
        <taxon>Trypanosomatidae</taxon>
        <taxon>Trypanosoma</taxon>
        <taxon>Nannomonas</taxon>
    </lineage>
</organism>
<evidence type="ECO:0000250" key="1"/>
<evidence type="ECO:0000255" key="2">
    <source>
        <dbReference type="PROSITE-ProRule" id="PRU00159"/>
    </source>
</evidence>
<evidence type="ECO:0000255" key="3">
    <source>
        <dbReference type="PROSITE-ProRule" id="PRU10027"/>
    </source>
</evidence>
<evidence type="ECO:0000305" key="4"/>
<reference key="1">
    <citation type="submission" date="1994-02" db="EMBL/GenBank/DDBJ databases">
        <authorList>
            <person name="Ricard B."/>
            <person name="Mottram J.C."/>
            <person name="Muthiani A."/>
            <person name="Omolo E."/>
            <person name="Pandit P."/>
            <person name="Gobright E."/>
            <person name="Murphy N.B."/>
        </authorList>
    </citation>
    <scope>NUCLEOTIDE SEQUENCE [GENOMIC DNA]</scope>
    <source>
        <strain>IL3000</strain>
    </source>
</reference>
<feature type="chain" id="PRO_0000085707" description="Cell division control protein 2 homolog 1">
    <location>
        <begin position="1"/>
        <end position="301"/>
    </location>
</feature>
<feature type="domain" description="Protein kinase" evidence="2">
    <location>
        <begin position="5"/>
        <end position="297"/>
    </location>
</feature>
<feature type="active site" description="Proton acceptor" evidence="2 3">
    <location>
        <position position="127"/>
    </location>
</feature>
<feature type="binding site" evidence="2">
    <location>
        <begin position="11"/>
        <end position="19"/>
    </location>
    <ligand>
        <name>ATP</name>
        <dbReference type="ChEBI" id="CHEBI:30616"/>
    </ligand>
</feature>
<feature type="binding site" evidence="2">
    <location>
        <position position="34"/>
    </location>
    <ligand>
        <name>ATP</name>
        <dbReference type="ChEBI" id="CHEBI:30616"/>
    </ligand>
</feature>
<feature type="modified residue" description="Phosphoserine" evidence="1">
    <location>
        <position position="15"/>
    </location>
</feature>
<feature type="modified residue" description="Phosphotyrosine" evidence="1">
    <location>
        <position position="16"/>
    </location>
</feature>
<feature type="modified residue" description="Phosphothreonine; by CAK" evidence="1">
    <location>
        <position position="160"/>
    </location>
</feature>
<name>CC2H1_TRYCO</name>
<accession>P54664</accession>
<keyword id="KW-0067">ATP-binding</keyword>
<keyword id="KW-0418">Kinase</keyword>
<keyword id="KW-0547">Nucleotide-binding</keyword>
<keyword id="KW-0597">Phosphoprotein</keyword>
<keyword id="KW-0723">Serine/threonine-protein kinase</keyword>
<keyword id="KW-0808">Transferase</keyword>
<sequence length="301" mass="34468">MGSRYQRLEKIGEGSYGVVYRARDITTDVIVALKRIRLESVEEGVPCTAIREISILKELRHENIVRLLDVCHSENRLNLVFEYMEMDLKKYMDRASGNLDPATIQEFMRSLLKGVRFCHERNVLHRDLKPPNLLISREKELKLADFGLGRAFGIPVKKYTHEVVTLWYRSPDVLLGSTQYGTPVDIWSVGCIFAEMAIGAPLFAGKNDADQLLRIFRFLGTPSSQVWPSMNLYPNSTNMLSKPEFQQNLIATCDEQFQTHPAYAKLGPQGIDLLRRLLRYEPGERLTAAQALEHPYFSVEF</sequence>
<dbReference type="EC" id="2.7.11.22"/>
<dbReference type="EMBL" id="Z30312">
    <property type="protein sequence ID" value="CAA82956.1"/>
    <property type="molecule type" value="Genomic_DNA"/>
</dbReference>
<dbReference type="PIR" id="S42101">
    <property type="entry name" value="S42101"/>
</dbReference>
<dbReference type="SMR" id="P54664"/>
<dbReference type="VEuPathDB" id="TriTrypDB:TcIL3000.A.H_000721800"/>
<dbReference type="VEuPathDB" id="TriTrypDB:TcIL3000_10_880"/>
<dbReference type="GO" id="GO:0005737">
    <property type="term" value="C:cytoplasm"/>
    <property type="evidence" value="ECO:0007669"/>
    <property type="project" value="TreeGrafter"/>
</dbReference>
<dbReference type="GO" id="GO:0005634">
    <property type="term" value="C:nucleus"/>
    <property type="evidence" value="ECO:0007669"/>
    <property type="project" value="TreeGrafter"/>
</dbReference>
<dbReference type="GO" id="GO:0005524">
    <property type="term" value="F:ATP binding"/>
    <property type="evidence" value="ECO:0007669"/>
    <property type="project" value="UniProtKB-KW"/>
</dbReference>
<dbReference type="GO" id="GO:0004693">
    <property type="term" value="F:cyclin-dependent protein serine/threonine kinase activity"/>
    <property type="evidence" value="ECO:0007669"/>
    <property type="project" value="UniProtKB-EC"/>
</dbReference>
<dbReference type="GO" id="GO:0106310">
    <property type="term" value="F:protein serine kinase activity"/>
    <property type="evidence" value="ECO:0007669"/>
    <property type="project" value="RHEA"/>
</dbReference>
<dbReference type="CDD" id="cd07829">
    <property type="entry name" value="STKc_CDK_like"/>
    <property type="match status" value="1"/>
</dbReference>
<dbReference type="FunFam" id="1.10.510.10:FF:000524">
    <property type="entry name" value="Cell division protein kinase 2"/>
    <property type="match status" value="1"/>
</dbReference>
<dbReference type="FunFam" id="3.30.200.20:FF:000375">
    <property type="entry name" value="Cell division related protein kinase 2"/>
    <property type="match status" value="1"/>
</dbReference>
<dbReference type="Gene3D" id="3.30.200.20">
    <property type="entry name" value="Phosphorylase Kinase, domain 1"/>
    <property type="match status" value="1"/>
</dbReference>
<dbReference type="Gene3D" id="1.10.510.10">
    <property type="entry name" value="Transferase(Phosphotransferase) domain 1"/>
    <property type="match status" value="1"/>
</dbReference>
<dbReference type="InterPro" id="IPR050108">
    <property type="entry name" value="CDK"/>
</dbReference>
<dbReference type="InterPro" id="IPR011009">
    <property type="entry name" value="Kinase-like_dom_sf"/>
</dbReference>
<dbReference type="InterPro" id="IPR000719">
    <property type="entry name" value="Prot_kinase_dom"/>
</dbReference>
<dbReference type="InterPro" id="IPR017441">
    <property type="entry name" value="Protein_kinase_ATP_BS"/>
</dbReference>
<dbReference type="InterPro" id="IPR008271">
    <property type="entry name" value="Ser/Thr_kinase_AS"/>
</dbReference>
<dbReference type="PANTHER" id="PTHR24056">
    <property type="entry name" value="CELL DIVISION PROTEIN KINASE"/>
    <property type="match status" value="1"/>
</dbReference>
<dbReference type="PANTHER" id="PTHR24056:SF46">
    <property type="entry name" value="CYCLIN-DEPENDENT KINASE 5"/>
    <property type="match status" value="1"/>
</dbReference>
<dbReference type="Pfam" id="PF00069">
    <property type="entry name" value="Pkinase"/>
    <property type="match status" value="1"/>
</dbReference>
<dbReference type="SMART" id="SM00220">
    <property type="entry name" value="S_TKc"/>
    <property type="match status" value="1"/>
</dbReference>
<dbReference type="SUPFAM" id="SSF56112">
    <property type="entry name" value="Protein kinase-like (PK-like)"/>
    <property type="match status" value="1"/>
</dbReference>
<dbReference type="PROSITE" id="PS00107">
    <property type="entry name" value="PROTEIN_KINASE_ATP"/>
    <property type="match status" value="1"/>
</dbReference>
<dbReference type="PROSITE" id="PS50011">
    <property type="entry name" value="PROTEIN_KINASE_DOM"/>
    <property type="match status" value="1"/>
</dbReference>
<dbReference type="PROSITE" id="PS00108">
    <property type="entry name" value="PROTEIN_KINASE_ST"/>
    <property type="match status" value="1"/>
</dbReference>
<protein>
    <recommendedName>
        <fullName>Cell division control protein 2 homolog 1</fullName>
        <ecNumber>2.7.11.22</ecNumber>
    </recommendedName>
</protein>
<gene>
    <name type="primary">CRK1</name>
    <name type="synonym">CRK</name>
</gene>
<comment type="function">
    <text>Probably involved in the control of the cell cycle.</text>
</comment>
<comment type="catalytic activity">
    <reaction>
        <text>L-seryl-[protein] + ATP = O-phospho-L-seryl-[protein] + ADP + H(+)</text>
        <dbReference type="Rhea" id="RHEA:17989"/>
        <dbReference type="Rhea" id="RHEA-COMP:9863"/>
        <dbReference type="Rhea" id="RHEA-COMP:11604"/>
        <dbReference type="ChEBI" id="CHEBI:15378"/>
        <dbReference type="ChEBI" id="CHEBI:29999"/>
        <dbReference type="ChEBI" id="CHEBI:30616"/>
        <dbReference type="ChEBI" id="CHEBI:83421"/>
        <dbReference type="ChEBI" id="CHEBI:456216"/>
        <dbReference type="EC" id="2.7.11.22"/>
    </reaction>
</comment>
<comment type="catalytic activity">
    <reaction>
        <text>L-threonyl-[protein] + ATP = O-phospho-L-threonyl-[protein] + ADP + H(+)</text>
        <dbReference type="Rhea" id="RHEA:46608"/>
        <dbReference type="Rhea" id="RHEA-COMP:11060"/>
        <dbReference type="Rhea" id="RHEA-COMP:11605"/>
        <dbReference type="ChEBI" id="CHEBI:15378"/>
        <dbReference type="ChEBI" id="CHEBI:30013"/>
        <dbReference type="ChEBI" id="CHEBI:30616"/>
        <dbReference type="ChEBI" id="CHEBI:61977"/>
        <dbReference type="ChEBI" id="CHEBI:456216"/>
        <dbReference type="EC" id="2.7.11.22"/>
    </reaction>
</comment>
<comment type="activity regulation">
    <text evidence="1">Phosphorylation at Ser-15 or Tyr-16 inactivates the enzyme, while phosphorylation at Thr-160 activates it.</text>
</comment>
<comment type="subunit">
    <text evidence="1">Forms a stable but non-covalent complex with a regulatory subunit and with a cyclin.</text>
</comment>
<comment type="similarity">
    <text evidence="4">Belongs to the protein kinase superfamily. CMGC Ser/Thr protein kinase family. CDC2/CDKX subfamily.</text>
</comment>
<proteinExistence type="inferred from homology"/>